<accession>A7Z3X5</accession>
<name>MTNX_BACVZ</name>
<comment type="function">
    <text evidence="1">Dephosphorylates 2-hydroxy-3-keto-5-methylthiopentenyl-1-phosphate (HK-MTPenyl-1-P) yielding 1,2-dihydroxy-3-keto-5-methylthiopentene (DHK-MTPene).</text>
</comment>
<comment type="catalytic activity">
    <reaction evidence="1">
        <text>2-hydroxy-5-methylsulfanyl-3-oxopent-1-enyl phosphate + H2O = 1,2-dihydroxy-5-(methylsulfanyl)pent-1-en-3-one + phosphate</text>
        <dbReference type="Rhea" id="RHEA:14481"/>
        <dbReference type="ChEBI" id="CHEBI:15377"/>
        <dbReference type="ChEBI" id="CHEBI:43474"/>
        <dbReference type="ChEBI" id="CHEBI:49252"/>
        <dbReference type="ChEBI" id="CHEBI:59505"/>
        <dbReference type="EC" id="3.1.3.87"/>
    </reaction>
</comment>
<comment type="pathway">
    <text evidence="1">Amino-acid biosynthesis; L-methionine biosynthesis via salvage pathway; L-methionine from S-methyl-5-thio-alpha-D-ribose 1-phosphate: step 4/6.</text>
</comment>
<comment type="similarity">
    <text evidence="1">Belongs to the HAD-like hydrolase superfamily. MtnX family.</text>
</comment>
<protein>
    <recommendedName>
        <fullName evidence="1">2-hydroxy-3-keto-5-methylthiopentenyl-1-phosphate phosphatase</fullName>
        <shortName evidence="1">HK-MTPenyl-1-P phosphatase</shortName>
        <ecNumber evidence="1">3.1.3.87</ecNumber>
    </recommendedName>
</protein>
<proteinExistence type="inferred from homology"/>
<reference key="1">
    <citation type="journal article" date="2007" name="Nat. Biotechnol.">
        <title>Comparative analysis of the complete genome sequence of the plant growth-promoting bacterium Bacillus amyloliquefaciens FZB42.</title>
        <authorList>
            <person name="Chen X.H."/>
            <person name="Koumoutsi A."/>
            <person name="Scholz R."/>
            <person name="Eisenreich A."/>
            <person name="Schneider K."/>
            <person name="Heinemeyer I."/>
            <person name="Morgenstern B."/>
            <person name="Voss B."/>
            <person name="Hess W.R."/>
            <person name="Reva O."/>
            <person name="Junge H."/>
            <person name="Voigt B."/>
            <person name="Jungblut P.R."/>
            <person name="Vater J."/>
            <person name="Suessmuth R."/>
            <person name="Liesegang H."/>
            <person name="Strittmatter A."/>
            <person name="Gottschalk G."/>
            <person name="Borriss R."/>
        </authorList>
    </citation>
    <scope>NUCLEOTIDE SEQUENCE [LARGE SCALE GENOMIC DNA]</scope>
    <source>
        <strain>DSM 23117 / BGSC 10A6 / LMG 26770 / FZB42</strain>
    </source>
</reference>
<feature type="chain" id="PRO_0000357473" description="2-hydroxy-3-keto-5-methylthiopentenyl-1-phosphate phosphatase">
    <location>
        <begin position="1"/>
        <end position="234"/>
    </location>
</feature>
<keyword id="KW-0028">Amino-acid biosynthesis</keyword>
<keyword id="KW-0378">Hydrolase</keyword>
<keyword id="KW-0486">Methionine biosynthesis</keyword>
<dbReference type="EC" id="3.1.3.87" evidence="1"/>
<dbReference type="EMBL" id="CP000560">
    <property type="protein sequence ID" value="ABS73701.1"/>
    <property type="molecule type" value="Genomic_DNA"/>
</dbReference>
<dbReference type="RefSeq" id="WP_007408467.1">
    <property type="nucleotide sequence ID" value="NC_009725.2"/>
</dbReference>
<dbReference type="SMR" id="A7Z3X5"/>
<dbReference type="GeneID" id="93080473"/>
<dbReference type="KEGG" id="bay:RBAM_013380"/>
<dbReference type="HOGENOM" id="CLU_058495_2_1_9"/>
<dbReference type="UniPathway" id="UPA00904">
    <property type="reaction ID" value="UER00877"/>
</dbReference>
<dbReference type="Proteomes" id="UP000001120">
    <property type="component" value="Chromosome"/>
</dbReference>
<dbReference type="GO" id="GO:0043716">
    <property type="term" value="F:2-hydroxy-3-keto-5-methylthiopentenyl-1-phosphate phosphatase activity"/>
    <property type="evidence" value="ECO:0007669"/>
    <property type="project" value="UniProtKB-UniRule"/>
</dbReference>
<dbReference type="GO" id="GO:0019509">
    <property type="term" value="P:L-methionine salvage from methylthioadenosine"/>
    <property type="evidence" value="ECO:0007669"/>
    <property type="project" value="UniProtKB-UniRule"/>
</dbReference>
<dbReference type="CDD" id="cd07524">
    <property type="entry name" value="HAD_Pase"/>
    <property type="match status" value="1"/>
</dbReference>
<dbReference type="Gene3D" id="3.90.1470.20">
    <property type="match status" value="1"/>
</dbReference>
<dbReference type="Gene3D" id="3.40.50.1000">
    <property type="entry name" value="HAD superfamily/HAD-like"/>
    <property type="match status" value="1"/>
</dbReference>
<dbReference type="HAMAP" id="MF_01680">
    <property type="entry name" value="Salvage_MtnX"/>
    <property type="match status" value="1"/>
</dbReference>
<dbReference type="InterPro" id="IPR050849">
    <property type="entry name" value="HAD-like_hydrolase_phosphatase"/>
</dbReference>
<dbReference type="InterPro" id="IPR036412">
    <property type="entry name" value="HAD-like_sf"/>
</dbReference>
<dbReference type="InterPro" id="IPR017718">
    <property type="entry name" value="HAD-SF_hydro_IB_MtnX"/>
</dbReference>
<dbReference type="InterPro" id="IPR006384">
    <property type="entry name" value="HAD_hydro_PyrdxlP_Pase-like"/>
</dbReference>
<dbReference type="InterPro" id="IPR023214">
    <property type="entry name" value="HAD_sf"/>
</dbReference>
<dbReference type="NCBIfam" id="TIGR01489">
    <property type="entry name" value="DKMTPPase-SF"/>
    <property type="match status" value="1"/>
</dbReference>
<dbReference type="NCBIfam" id="TIGR01488">
    <property type="entry name" value="HAD-SF-IB"/>
    <property type="match status" value="1"/>
</dbReference>
<dbReference type="NCBIfam" id="NF007103">
    <property type="entry name" value="PRK09552.1"/>
    <property type="match status" value="1"/>
</dbReference>
<dbReference type="NCBIfam" id="TIGR03333">
    <property type="entry name" value="salvage_mtnX"/>
    <property type="match status" value="1"/>
</dbReference>
<dbReference type="PANTHER" id="PTHR28181:SF2">
    <property type="entry name" value="PHOSPHORIC MONOESTER HYDROLASE"/>
    <property type="match status" value="1"/>
</dbReference>
<dbReference type="PANTHER" id="PTHR28181">
    <property type="entry name" value="UPF0655 PROTEIN YCR015C"/>
    <property type="match status" value="1"/>
</dbReference>
<dbReference type="Pfam" id="PF12710">
    <property type="entry name" value="HAD"/>
    <property type="match status" value="1"/>
</dbReference>
<dbReference type="SUPFAM" id="SSF56784">
    <property type="entry name" value="HAD-like"/>
    <property type="match status" value="1"/>
</dbReference>
<sequence length="234" mass="26337">MTRTPLIICDFDGTVTMNDNIVSMMKEFAPPEWLELKDGVLSKSISIQEGVGRMFGLLPSSLKEELTGFILKDAKIRDGFLDFVSFVRSNGLPFYIVSGGMDFFVHPLLEGIVEKERIFCNHASFDNEHIHIDWPHACDGDCTNQCGCCKPSVIRKLSDQQKFLIMIGDSVTDVEAAKLSDMCFARDYLLTECKELGLRHLPFQDFHEVKTGIENIGEVQAWLQKKNAGANLPR</sequence>
<organism>
    <name type="scientific">Bacillus velezensis (strain DSM 23117 / BGSC 10A6 / LMG 26770 / FZB42)</name>
    <name type="common">Bacillus amyloliquefaciens subsp. plantarum</name>
    <dbReference type="NCBI Taxonomy" id="326423"/>
    <lineage>
        <taxon>Bacteria</taxon>
        <taxon>Bacillati</taxon>
        <taxon>Bacillota</taxon>
        <taxon>Bacilli</taxon>
        <taxon>Bacillales</taxon>
        <taxon>Bacillaceae</taxon>
        <taxon>Bacillus</taxon>
        <taxon>Bacillus amyloliquefaciens group</taxon>
    </lineage>
</organism>
<evidence type="ECO:0000255" key="1">
    <source>
        <dbReference type="HAMAP-Rule" id="MF_01680"/>
    </source>
</evidence>
<gene>
    <name evidence="1" type="primary">mtnX</name>
    <name type="ordered locus">RBAM_013380</name>
</gene>